<gene>
    <name type="primary">PDR11</name>
    <name type="ordered locus">YIL013C</name>
</gene>
<comment type="function">
    <text evidence="3">Transporter involved in the uptake of sterol.</text>
</comment>
<comment type="subcellular location">
    <subcellularLocation>
        <location evidence="5">Membrane</location>
        <topology evidence="5">Multi-pass membrane protein</topology>
    </subcellularLocation>
</comment>
<comment type="similarity">
    <text evidence="5">Belongs to the ABC transporter superfamily. ABCG family. PDR (TC 3.A.1.205) subfamily.</text>
</comment>
<keyword id="KW-0067">ATP-binding</keyword>
<keyword id="KW-0903">Direct protein sequencing</keyword>
<keyword id="KW-0325">Glycoprotein</keyword>
<keyword id="KW-0472">Membrane</keyword>
<keyword id="KW-0547">Nucleotide-binding</keyword>
<keyword id="KW-1185">Reference proteome</keyword>
<keyword id="KW-0677">Repeat</keyword>
<keyword id="KW-0812">Transmembrane</keyword>
<keyword id="KW-1133">Transmembrane helix</keyword>
<keyword id="KW-0813">Transport</keyword>
<evidence type="ECO:0000255" key="1"/>
<evidence type="ECO:0000255" key="2">
    <source>
        <dbReference type="PROSITE-ProRule" id="PRU00434"/>
    </source>
</evidence>
<evidence type="ECO:0000269" key="3">
    <source>
    </source>
</evidence>
<evidence type="ECO:0000269" key="4">
    <source>
    </source>
</evidence>
<evidence type="ECO:0000305" key="5"/>
<accession>P40550</accession>
<accession>D6VVR7</accession>
<accession>Q03092</accession>
<sequence>MSLSKYFNPIPDASVTFDGATVQLEESLGAVQNDEESASEFKNVGHLEISDITFRANEGEVVLVLGNPTSALFKGLFHGHKHLKYSPEGSIRFKDNEYKQFASKCPHQIIYNNEQDIHFPYLTVEQTIDFALSCKFHIPKQERIEMRDELLKEFGLSHVKKTYVGNDYVRGVSGGERKRISIIETFIANGSVYLWDNSTKGLDSATALEFLSITQKMAKATRSVNFVKISQASDKIVSKFDKILMLGDSFQVFYGTMEECLTHFHDTLQIKKNPNDCIIEYLTSILNFKFKETSNSIVGLDTPSVVSEENQALNINNETDLHTLWIQSPYYKHWKAITSKTVQECTRKDVNPDDISPIFSIPLKTQLKTCTVRAFERIIGDRNYLISQFVSVVVQSLVIGSLFYNIPLTTIGSFSRGSLTFFSILFFTFLSLADMPASFQRQPVVRKHVQLHFYYNWVETLATNFFDCCSKFILVVIFTIILYFLAHLQYNAARFFIFLLFLSVYNFCMVSLFALTALIAPTLSMANLLAGILLLAIAMYASYVIYMKDMHPWFIWIAYLNPAMFAMEAILSNELFNLKLDCHESIIPRGEYYDNISFSHKACAWQGATLGNDYVRGRDYLKSGLKYTYHHVWRNFGIIIGFLCFFLFCSLLAAEYITPLFTRENLLRWNNYLKRYCPFLNSQKKNNKSAITNNDGVCTPKTPIANFSTSSSSVPSVSHQYDTDYNIKHPDETVNNHTKESVAMETQKHVISWKNINYTIGDKKLINDASGYISSGLTALMGESGAGKTTLLNVLSQRTESGVVTGELLIDGQPLTNIDAFRRSIGFVQQQDVHLELLTVRESLEISCVLRGDGDRDYLGVVSNLLRLPSEKLVADLSPTQRKLLSIGVELVTKPSLLLFLDEPTSGLDAEAALTIVQFLKKLSMQGQAILCTIHQPSKSVISYFDNIYLLKRGGECVYFGSLPNACDYFVAHDRRLTFDREMDNPADFVIDVVGSGSTNIPMDDAEKPTSSKIDEPVSYHKQSDSINWAELWQSSPEKVRVADDLLLLEEEARKSGVDFTTSVWSPPSYMEQIKLITKRQYICTKRDMTYVFAKYALNAGAGLFIGFSFWRTKHNINGLQDAIFLCFMMLCVSSPLINQVQDKALQSKEVYIAREARSNTYHWTVLLIAQTIVELPLAISSSTLFFLCCYFCCGFETSARVAGVFYLNYILFSMYYLSFGLWLLYSAPDLQTAAVFVAFLYSFTASFCGVMQPYSLFPRFWTFMYRVSPYTYFIETFVSLLLHDREVNCSTSEMVPSQPVMGQTCGQFMKPFIDEFGGKLHINNTYTVCAYCMYTVGDDFLAQENMSYHHRWRNFGFEWVFVCFNIAAMFVGFYLTYIKKIWPSVIDGIKKCIPSMRRSKTSHNPNEQSV</sequence>
<dbReference type="EMBL" id="Z38113">
    <property type="protein sequence ID" value="CAA86236.1"/>
    <property type="molecule type" value="Genomic_DNA"/>
</dbReference>
<dbReference type="EMBL" id="Z46881">
    <property type="protein sequence ID" value="CAA86980.1"/>
    <property type="molecule type" value="Genomic_DNA"/>
</dbReference>
<dbReference type="EMBL" id="BK006942">
    <property type="protein sequence ID" value="DAA08533.1"/>
    <property type="molecule type" value="Genomic_DNA"/>
</dbReference>
<dbReference type="PIR" id="S48442">
    <property type="entry name" value="S48442"/>
</dbReference>
<dbReference type="RefSeq" id="NP_012252.1">
    <property type="nucleotide sequence ID" value="NM_001179363.1"/>
</dbReference>
<dbReference type="SMR" id="P40550"/>
<dbReference type="BioGRID" id="34978">
    <property type="interactions" value="93"/>
</dbReference>
<dbReference type="DIP" id="DIP-8310N"/>
<dbReference type="FunCoup" id="P40550">
    <property type="interactions" value="299"/>
</dbReference>
<dbReference type="IntAct" id="P40550">
    <property type="interactions" value="8"/>
</dbReference>
<dbReference type="MINT" id="P40550"/>
<dbReference type="STRING" id="4932.YIL013C"/>
<dbReference type="TCDB" id="3.A.1.205.8">
    <property type="family name" value="the atp-binding cassette (abc) superfamily"/>
</dbReference>
<dbReference type="CarbonylDB" id="P40550"/>
<dbReference type="GlyCosmos" id="P40550">
    <property type="glycosylation" value="4 sites, No reported glycans"/>
</dbReference>
<dbReference type="GlyGen" id="P40550">
    <property type="glycosylation" value="4 sites"/>
</dbReference>
<dbReference type="PaxDb" id="4932-YIL013C"/>
<dbReference type="PeptideAtlas" id="P40550"/>
<dbReference type="EnsemblFungi" id="YIL013C_mRNA">
    <property type="protein sequence ID" value="YIL013C"/>
    <property type="gene ID" value="YIL013C"/>
</dbReference>
<dbReference type="GeneID" id="854802"/>
<dbReference type="KEGG" id="sce:YIL013C"/>
<dbReference type="AGR" id="SGD:S000001275"/>
<dbReference type="SGD" id="S000001275">
    <property type="gene designation" value="PDR11"/>
</dbReference>
<dbReference type="VEuPathDB" id="FungiDB:YIL013C"/>
<dbReference type="eggNOG" id="KOG0065">
    <property type="taxonomic scope" value="Eukaryota"/>
</dbReference>
<dbReference type="GeneTree" id="ENSGT00940000176496"/>
<dbReference type="HOGENOM" id="CLU_000604_35_0_1"/>
<dbReference type="InParanoid" id="P40550"/>
<dbReference type="OMA" id="YLNPAMF"/>
<dbReference type="OrthoDB" id="66620at2759"/>
<dbReference type="BioCyc" id="YEAST:G3O-31289-MONOMER"/>
<dbReference type="BioGRID-ORCS" id="854802">
    <property type="hits" value="3 hits in 10 CRISPR screens"/>
</dbReference>
<dbReference type="PRO" id="PR:P40550"/>
<dbReference type="Proteomes" id="UP000002311">
    <property type="component" value="Chromosome IX"/>
</dbReference>
<dbReference type="RNAct" id="P40550">
    <property type="molecule type" value="protein"/>
</dbReference>
<dbReference type="GO" id="GO:0071944">
    <property type="term" value="C:cell periphery"/>
    <property type="evidence" value="ECO:0007005"/>
    <property type="project" value="SGD"/>
</dbReference>
<dbReference type="GO" id="GO:0005886">
    <property type="term" value="C:plasma membrane"/>
    <property type="evidence" value="ECO:0000314"/>
    <property type="project" value="SGD"/>
</dbReference>
<dbReference type="GO" id="GO:0140359">
    <property type="term" value="F:ABC-type transporter activity"/>
    <property type="evidence" value="ECO:0007669"/>
    <property type="project" value="InterPro"/>
</dbReference>
<dbReference type="GO" id="GO:0005524">
    <property type="term" value="F:ATP binding"/>
    <property type="evidence" value="ECO:0007669"/>
    <property type="project" value="UniProtKB-KW"/>
</dbReference>
<dbReference type="GO" id="GO:0016887">
    <property type="term" value="F:ATP hydrolysis activity"/>
    <property type="evidence" value="ECO:0007669"/>
    <property type="project" value="InterPro"/>
</dbReference>
<dbReference type="GO" id="GO:0042626">
    <property type="term" value="F:ATPase-coupled transmembrane transporter activity"/>
    <property type="evidence" value="ECO:0000314"/>
    <property type="project" value="SGD"/>
</dbReference>
<dbReference type="GO" id="GO:0035376">
    <property type="term" value="P:sterol import"/>
    <property type="evidence" value="ECO:0000315"/>
    <property type="project" value="SGD"/>
</dbReference>
<dbReference type="CDD" id="cd03233">
    <property type="entry name" value="ABCG_PDR_domain1"/>
    <property type="match status" value="1"/>
</dbReference>
<dbReference type="CDD" id="cd03232">
    <property type="entry name" value="ABCG_PDR_domain2"/>
    <property type="match status" value="1"/>
</dbReference>
<dbReference type="FunFam" id="3.40.50.300:FF:001618">
    <property type="entry name" value="ABC transporter"/>
    <property type="match status" value="1"/>
</dbReference>
<dbReference type="FunFam" id="3.40.50.300:FF:001648">
    <property type="entry name" value="ABC transporter"/>
    <property type="match status" value="1"/>
</dbReference>
<dbReference type="Gene3D" id="3.40.50.300">
    <property type="entry name" value="P-loop containing nucleotide triphosphate hydrolases"/>
    <property type="match status" value="2"/>
</dbReference>
<dbReference type="InterPro" id="IPR003593">
    <property type="entry name" value="AAA+_ATPase"/>
</dbReference>
<dbReference type="InterPro" id="IPR013525">
    <property type="entry name" value="ABC2_TM"/>
</dbReference>
<dbReference type="InterPro" id="IPR003439">
    <property type="entry name" value="ABC_transporter-like_ATP-bd"/>
</dbReference>
<dbReference type="InterPro" id="IPR017871">
    <property type="entry name" value="ABC_transporter-like_CS"/>
</dbReference>
<dbReference type="InterPro" id="IPR043926">
    <property type="entry name" value="ABCG_dom"/>
</dbReference>
<dbReference type="InterPro" id="IPR034001">
    <property type="entry name" value="ABCG_PDR_1"/>
</dbReference>
<dbReference type="InterPro" id="IPR034003">
    <property type="entry name" value="ABCG_PDR_2"/>
</dbReference>
<dbReference type="InterPro" id="IPR027417">
    <property type="entry name" value="P-loop_NTPase"/>
</dbReference>
<dbReference type="InterPro" id="IPR010929">
    <property type="entry name" value="PDR_CDR_ABC"/>
</dbReference>
<dbReference type="PANTHER" id="PTHR19241">
    <property type="entry name" value="ATP-BINDING CASSETTE TRANSPORTER"/>
    <property type="match status" value="1"/>
</dbReference>
<dbReference type="Pfam" id="PF01061">
    <property type="entry name" value="ABC2_membrane"/>
    <property type="match status" value="2"/>
</dbReference>
<dbReference type="Pfam" id="PF19055">
    <property type="entry name" value="ABC2_membrane_7"/>
    <property type="match status" value="1"/>
</dbReference>
<dbReference type="Pfam" id="PF00005">
    <property type="entry name" value="ABC_tran"/>
    <property type="match status" value="2"/>
</dbReference>
<dbReference type="Pfam" id="PF06422">
    <property type="entry name" value="PDR_CDR"/>
    <property type="match status" value="1"/>
</dbReference>
<dbReference type="SMART" id="SM00382">
    <property type="entry name" value="AAA"/>
    <property type="match status" value="1"/>
</dbReference>
<dbReference type="SUPFAM" id="SSF52540">
    <property type="entry name" value="P-loop containing nucleoside triphosphate hydrolases"/>
    <property type="match status" value="2"/>
</dbReference>
<dbReference type="PROSITE" id="PS00211">
    <property type="entry name" value="ABC_TRANSPORTER_1"/>
    <property type="match status" value="1"/>
</dbReference>
<dbReference type="PROSITE" id="PS50893">
    <property type="entry name" value="ABC_TRANSPORTER_2"/>
    <property type="match status" value="2"/>
</dbReference>
<organism>
    <name type="scientific">Saccharomyces cerevisiae (strain ATCC 204508 / S288c)</name>
    <name type="common">Baker's yeast</name>
    <dbReference type="NCBI Taxonomy" id="559292"/>
    <lineage>
        <taxon>Eukaryota</taxon>
        <taxon>Fungi</taxon>
        <taxon>Dikarya</taxon>
        <taxon>Ascomycota</taxon>
        <taxon>Saccharomycotina</taxon>
        <taxon>Saccharomycetes</taxon>
        <taxon>Saccharomycetales</taxon>
        <taxon>Saccharomycetaceae</taxon>
        <taxon>Saccharomyces</taxon>
    </lineage>
</organism>
<reference key="1">
    <citation type="journal article" date="1997" name="Nature">
        <title>The nucleotide sequence of Saccharomyces cerevisiae chromosome IX.</title>
        <authorList>
            <person name="Churcher C.M."/>
            <person name="Bowman S."/>
            <person name="Badcock K."/>
            <person name="Bankier A.T."/>
            <person name="Brown D."/>
            <person name="Chillingworth T."/>
            <person name="Connor R."/>
            <person name="Devlin K."/>
            <person name="Gentles S."/>
            <person name="Hamlin N."/>
            <person name="Harris D.E."/>
            <person name="Horsnell T."/>
            <person name="Hunt S."/>
            <person name="Jagels K."/>
            <person name="Jones M."/>
            <person name="Lye G."/>
            <person name="Moule S."/>
            <person name="Odell C."/>
            <person name="Pearson D."/>
            <person name="Rajandream M.A."/>
            <person name="Rice P."/>
            <person name="Rowley N."/>
            <person name="Skelton J."/>
            <person name="Smith V."/>
            <person name="Walsh S.V."/>
            <person name="Whitehead S."/>
            <person name="Barrell B.G."/>
        </authorList>
    </citation>
    <scope>NUCLEOTIDE SEQUENCE [LARGE SCALE GENOMIC DNA]</scope>
    <source>
        <strain>ATCC 204508 / S288c</strain>
    </source>
</reference>
<reference key="2">
    <citation type="journal article" date="2014" name="G3 (Bethesda)">
        <title>The reference genome sequence of Saccharomyces cerevisiae: Then and now.</title>
        <authorList>
            <person name="Engel S.R."/>
            <person name="Dietrich F.S."/>
            <person name="Fisk D.G."/>
            <person name="Binkley G."/>
            <person name="Balakrishnan R."/>
            <person name="Costanzo M.C."/>
            <person name="Dwight S.S."/>
            <person name="Hitz B.C."/>
            <person name="Karra K."/>
            <person name="Nash R.S."/>
            <person name="Weng S."/>
            <person name="Wong E.D."/>
            <person name="Lloyd P."/>
            <person name="Skrzypek M.S."/>
            <person name="Miyasato S.R."/>
            <person name="Simison M."/>
            <person name="Cherry J.M."/>
        </authorList>
    </citation>
    <scope>GENOME REANNOTATION</scope>
    <source>
        <strain>ATCC 204508 / S288c</strain>
    </source>
</reference>
<reference key="3">
    <citation type="journal article" date="1995" name="J. Biol. Chem.">
        <title>Identification and characterization of SNQ2, a new multidrug ATP binding cassette transporter of the yeast plasma membrane.</title>
        <authorList>
            <person name="Decottignies A."/>
            <person name="Lambert L."/>
            <person name="Catty P."/>
            <person name="Degand H."/>
            <person name="Epping E.A."/>
            <person name="Moye-Rowley W.S."/>
            <person name="Balzi E."/>
            <person name="Goffeau A."/>
        </authorList>
    </citation>
    <scope>IDENTIFICATION</scope>
    <scope>PROTEIN SEQUENCE OF 2-11</scope>
</reference>
<reference key="4">
    <citation type="journal article" date="2002" name="J. Biol. Chem.">
        <title>Transcriptional profiling identifies two members of the ATP-binding cassette transporter superfamily required for sterol uptake in yeast.</title>
        <authorList>
            <person name="Wilcox L.J."/>
            <person name="Balderes D.A."/>
            <person name="Wharton B."/>
            <person name="Tinkelenberg A.H."/>
            <person name="Rao G."/>
            <person name="Sturley S.L."/>
        </authorList>
    </citation>
    <scope>FUNCTION</scope>
</reference>
<reference key="5">
    <citation type="journal article" date="2006" name="Proc. Natl. Acad. Sci. U.S.A.">
        <title>A global topology map of the Saccharomyces cerevisiae membrane proteome.</title>
        <authorList>
            <person name="Kim H."/>
            <person name="Melen K."/>
            <person name="Oesterberg M."/>
            <person name="von Heijne G."/>
        </authorList>
    </citation>
    <scope>TOPOLOGY [LARGE SCALE ANALYSIS]</scope>
    <source>
        <strain>ATCC 208353 / W303-1A</strain>
    </source>
</reference>
<protein>
    <recommendedName>
        <fullName>ATP-dependent permease PDR11</fullName>
    </recommendedName>
</protein>
<proteinExistence type="evidence at protein level"/>
<feature type="initiator methionine" description="Removed" evidence="4">
    <location>
        <position position="1"/>
    </location>
</feature>
<feature type="chain" id="PRO_0000093444" description="ATP-dependent permease PDR11">
    <location>
        <begin position="2"/>
        <end position="1411"/>
    </location>
</feature>
<feature type="topological domain" description="Cytoplasmic" evidence="1">
    <location>
        <begin position="2"/>
        <end position="388"/>
    </location>
</feature>
<feature type="transmembrane region" description="Helical" evidence="1">
    <location>
        <begin position="389"/>
        <end position="409"/>
    </location>
</feature>
<feature type="topological domain" description="Extracellular" evidence="1">
    <location>
        <begin position="410"/>
        <end position="418"/>
    </location>
</feature>
<feature type="transmembrane region" description="Helical" evidence="1">
    <location>
        <begin position="419"/>
        <end position="439"/>
    </location>
</feature>
<feature type="topological domain" description="Cytoplasmic" evidence="1">
    <location>
        <begin position="440"/>
        <end position="471"/>
    </location>
</feature>
<feature type="transmembrane region" description="Helical" evidence="1">
    <location>
        <begin position="472"/>
        <end position="492"/>
    </location>
</feature>
<feature type="topological domain" description="Extracellular" evidence="1">
    <location>
        <begin position="493"/>
        <end position="494"/>
    </location>
</feature>
<feature type="transmembrane region" description="Helical" evidence="1">
    <location>
        <begin position="495"/>
        <end position="515"/>
    </location>
</feature>
<feature type="topological domain" description="Cytoplasmic" evidence="1">
    <location>
        <begin position="516"/>
        <end position="524"/>
    </location>
</feature>
<feature type="transmembrane region" description="Helical" evidence="1">
    <location>
        <begin position="525"/>
        <end position="545"/>
    </location>
</feature>
<feature type="topological domain" description="Extracellular" evidence="1">
    <location>
        <begin position="546"/>
        <end position="636"/>
    </location>
</feature>
<feature type="transmembrane region" description="Helical" evidence="1">
    <location>
        <begin position="637"/>
        <end position="657"/>
    </location>
</feature>
<feature type="topological domain" description="Cytoplasmic" evidence="1">
    <location>
        <begin position="658"/>
        <end position="1090"/>
    </location>
</feature>
<feature type="transmembrane region" description="Helical" evidence="1">
    <location>
        <begin position="1091"/>
        <end position="1111"/>
    </location>
</feature>
<feature type="topological domain" description="Extracellular" evidence="1">
    <location>
        <begin position="1112"/>
        <end position="1117"/>
    </location>
</feature>
<feature type="transmembrane region" description="Helical" evidence="1">
    <location>
        <begin position="1118"/>
        <end position="1138"/>
    </location>
</feature>
<feature type="topological domain" description="Cytoplasmic" evidence="1">
    <location>
        <begin position="1139"/>
        <end position="1175"/>
    </location>
</feature>
<feature type="transmembrane region" description="Helical" evidence="1">
    <location>
        <begin position="1176"/>
        <end position="1196"/>
    </location>
</feature>
<feature type="topological domain" description="Extracellular" evidence="1">
    <location>
        <begin position="1197"/>
        <end position="1204"/>
    </location>
</feature>
<feature type="transmembrane region" description="Helical" evidence="1">
    <location>
        <begin position="1205"/>
        <end position="1225"/>
    </location>
</feature>
<feature type="topological domain" description="Cytoplasmic" evidence="1">
    <location>
        <begin position="1226"/>
        <end position="1230"/>
    </location>
</feature>
<feature type="transmembrane region" description="Helical" evidence="1">
    <location>
        <begin position="1231"/>
        <end position="1251"/>
    </location>
</feature>
<feature type="topological domain" description="Extracellular" evidence="1">
    <location>
        <begin position="1252"/>
        <end position="1355"/>
    </location>
</feature>
<feature type="transmembrane region" description="Helical" evidence="1">
    <location>
        <begin position="1356"/>
        <end position="1376"/>
    </location>
</feature>
<feature type="topological domain" description="Cytoplasmic" evidence="1">
    <location>
        <begin position="1377"/>
        <end position="1411"/>
    </location>
</feature>
<feature type="domain" description="ABC transporter 1" evidence="2">
    <location>
        <begin position="31"/>
        <end position="273"/>
    </location>
</feature>
<feature type="domain" description="ABC transporter 2" evidence="2">
    <location>
        <begin position="751"/>
        <end position="979"/>
    </location>
</feature>
<feature type="binding site" evidence="2">
    <location>
        <begin position="782"/>
        <end position="789"/>
    </location>
    <ligand>
        <name>ATP</name>
        <dbReference type="ChEBI" id="CHEBI:30616"/>
    </ligand>
</feature>
<feature type="glycosylation site" description="N-linked (GlcNAc...) asparagine" evidence="1">
    <location>
        <position position="595"/>
    </location>
</feature>
<feature type="glycosylation site" description="N-linked (GlcNAc...) asparagine" evidence="1">
    <location>
        <position position="1289"/>
    </location>
</feature>
<feature type="glycosylation site" description="N-linked (GlcNAc...) asparagine" evidence="1">
    <location>
        <position position="1324"/>
    </location>
</feature>
<feature type="glycosylation site" description="N-linked (GlcNAc...) asparagine" evidence="1">
    <location>
        <position position="1346"/>
    </location>
</feature>
<name>PDR11_YEAST</name>